<proteinExistence type="inferred from homology"/>
<accession>A5W8T2</accession>
<reference key="1">
    <citation type="submission" date="2007-05" db="EMBL/GenBank/DDBJ databases">
        <title>Complete sequence of Pseudomonas putida F1.</title>
        <authorList>
            <consortium name="US DOE Joint Genome Institute"/>
            <person name="Copeland A."/>
            <person name="Lucas S."/>
            <person name="Lapidus A."/>
            <person name="Barry K."/>
            <person name="Detter J.C."/>
            <person name="Glavina del Rio T."/>
            <person name="Hammon N."/>
            <person name="Israni S."/>
            <person name="Dalin E."/>
            <person name="Tice H."/>
            <person name="Pitluck S."/>
            <person name="Chain P."/>
            <person name="Malfatti S."/>
            <person name="Shin M."/>
            <person name="Vergez L."/>
            <person name="Schmutz J."/>
            <person name="Larimer F."/>
            <person name="Land M."/>
            <person name="Hauser L."/>
            <person name="Kyrpides N."/>
            <person name="Lykidis A."/>
            <person name="Parales R."/>
            <person name="Richardson P."/>
        </authorList>
    </citation>
    <scope>NUCLEOTIDE SEQUENCE [LARGE SCALE GENOMIC DNA]</scope>
    <source>
        <strain>ATCC 700007 / DSM 6899 / JCM 31910 / BCRC 17059 / LMG 24140 / F1</strain>
    </source>
</reference>
<protein>
    <recommendedName>
        <fullName evidence="1">Sulfate adenylyltransferase subunit 2</fullName>
        <ecNumber evidence="1">2.7.7.4</ecNumber>
    </recommendedName>
    <alternativeName>
        <fullName evidence="1">ATP-sulfurylase small subunit</fullName>
    </alternativeName>
    <alternativeName>
        <fullName evidence="1">Sulfate adenylate transferase</fullName>
        <shortName evidence="1">SAT</shortName>
    </alternativeName>
</protein>
<organism>
    <name type="scientific">Pseudomonas putida (strain ATCC 700007 / DSM 6899 / JCM 31910 / BCRC 17059 / LMG 24140 / F1)</name>
    <dbReference type="NCBI Taxonomy" id="351746"/>
    <lineage>
        <taxon>Bacteria</taxon>
        <taxon>Pseudomonadati</taxon>
        <taxon>Pseudomonadota</taxon>
        <taxon>Gammaproteobacteria</taxon>
        <taxon>Pseudomonadales</taxon>
        <taxon>Pseudomonadaceae</taxon>
        <taxon>Pseudomonas</taxon>
    </lineage>
</organism>
<evidence type="ECO:0000255" key="1">
    <source>
        <dbReference type="HAMAP-Rule" id="MF_00064"/>
    </source>
</evidence>
<name>CYSD_PSEP1</name>
<feature type="chain" id="PRO_1000008971" description="Sulfate adenylyltransferase subunit 2">
    <location>
        <begin position="1"/>
        <end position="305"/>
    </location>
</feature>
<dbReference type="EC" id="2.7.7.4" evidence="1"/>
<dbReference type="EMBL" id="CP000712">
    <property type="protein sequence ID" value="ABQ80542.1"/>
    <property type="molecule type" value="Genomic_DNA"/>
</dbReference>
<dbReference type="SMR" id="A5W8T2"/>
<dbReference type="KEGG" id="ppf:Pput_4422"/>
<dbReference type="eggNOG" id="COG0175">
    <property type="taxonomic scope" value="Bacteria"/>
</dbReference>
<dbReference type="HOGENOM" id="CLU_043026_0_0_6"/>
<dbReference type="UniPathway" id="UPA00140">
    <property type="reaction ID" value="UER00204"/>
</dbReference>
<dbReference type="GO" id="GO:0005524">
    <property type="term" value="F:ATP binding"/>
    <property type="evidence" value="ECO:0007669"/>
    <property type="project" value="UniProtKB-KW"/>
</dbReference>
<dbReference type="GO" id="GO:0004781">
    <property type="term" value="F:sulfate adenylyltransferase (ATP) activity"/>
    <property type="evidence" value="ECO:0007669"/>
    <property type="project" value="UniProtKB-UniRule"/>
</dbReference>
<dbReference type="GO" id="GO:0070814">
    <property type="term" value="P:hydrogen sulfide biosynthetic process"/>
    <property type="evidence" value="ECO:0007669"/>
    <property type="project" value="UniProtKB-UniRule"/>
</dbReference>
<dbReference type="GO" id="GO:0000103">
    <property type="term" value="P:sulfate assimilation"/>
    <property type="evidence" value="ECO:0007669"/>
    <property type="project" value="UniProtKB-UniRule"/>
</dbReference>
<dbReference type="CDD" id="cd23946">
    <property type="entry name" value="Sulfate_adenylyltransferase_2"/>
    <property type="match status" value="1"/>
</dbReference>
<dbReference type="FunFam" id="3.40.50.620:FF:000002">
    <property type="entry name" value="Sulfate adenylyltransferase subunit 2"/>
    <property type="match status" value="1"/>
</dbReference>
<dbReference type="Gene3D" id="3.40.50.620">
    <property type="entry name" value="HUPs"/>
    <property type="match status" value="1"/>
</dbReference>
<dbReference type="HAMAP" id="MF_00064">
    <property type="entry name" value="Sulf_adenylyltr_sub2"/>
    <property type="match status" value="1"/>
</dbReference>
<dbReference type="InterPro" id="IPR002500">
    <property type="entry name" value="PAPS_reduct_dom"/>
</dbReference>
<dbReference type="InterPro" id="IPR014729">
    <property type="entry name" value="Rossmann-like_a/b/a_fold"/>
</dbReference>
<dbReference type="InterPro" id="IPR011784">
    <property type="entry name" value="SO4_adenylTrfase_ssu"/>
</dbReference>
<dbReference type="InterPro" id="IPR050128">
    <property type="entry name" value="Sulfate_adenylyltrnsfr_sub2"/>
</dbReference>
<dbReference type="NCBIfam" id="TIGR02039">
    <property type="entry name" value="CysD"/>
    <property type="match status" value="1"/>
</dbReference>
<dbReference type="NCBIfam" id="NF003587">
    <property type="entry name" value="PRK05253.1"/>
    <property type="match status" value="1"/>
</dbReference>
<dbReference type="NCBIfam" id="NF009214">
    <property type="entry name" value="PRK12563.1"/>
    <property type="match status" value="1"/>
</dbReference>
<dbReference type="PANTHER" id="PTHR43196">
    <property type="entry name" value="SULFATE ADENYLYLTRANSFERASE SUBUNIT 2"/>
    <property type="match status" value="1"/>
</dbReference>
<dbReference type="PANTHER" id="PTHR43196:SF1">
    <property type="entry name" value="SULFATE ADENYLYLTRANSFERASE SUBUNIT 2"/>
    <property type="match status" value="1"/>
</dbReference>
<dbReference type="Pfam" id="PF01507">
    <property type="entry name" value="PAPS_reduct"/>
    <property type="match status" value="1"/>
</dbReference>
<dbReference type="PIRSF" id="PIRSF002936">
    <property type="entry name" value="CysDAde_trans"/>
    <property type="match status" value="1"/>
</dbReference>
<dbReference type="SUPFAM" id="SSF52402">
    <property type="entry name" value="Adenine nucleotide alpha hydrolases-like"/>
    <property type="match status" value="1"/>
</dbReference>
<sequence length="305" mass="35284">MVDKLTHLKQLEAESIHIIREVAAEFDNPVMLYSIGKDSAVMLHLARKAFFPGKLPFPVMHVDTQWKFQEMYSFRDKMVEEMGLELITHVNPEGVAQGINPFTHGSSKHTDIMKTQGLKQALDKHGFDAAFGGARRDEEKSRAKERVYSFRDSKHRWDPKNQRPELWNVYNGKVNKGESIRVFPLSNWTELDIWQYIYLEGIPIVPLYFAAEREVIEKNGTLIMIDDERILEHLSEEEKARIVKKKVRFRTLGCYPLTGAVESEAETLTDIIQEMLLTRTSERQGRVIDHDGAGSMEDKKRQGYF</sequence>
<gene>
    <name evidence="1" type="primary">cysD</name>
    <name type="ordered locus">Pput_4422</name>
</gene>
<keyword id="KW-0067">ATP-binding</keyword>
<keyword id="KW-0547">Nucleotide-binding</keyword>
<keyword id="KW-0548">Nucleotidyltransferase</keyword>
<keyword id="KW-0808">Transferase</keyword>
<comment type="function">
    <text evidence="1">With CysN forms the ATP sulfurylase (ATPS) that catalyzes the adenylation of sulfate producing adenosine 5'-phosphosulfate (APS) and diphosphate, the first enzymatic step in sulfur assimilation pathway. APS synthesis involves the formation of a high-energy phosphoric-sulfuric acid anhydride bond driven by GTP hydrolysis by CysN coupled to ATP hydrolysis by CysD.</text>
</comment>
<comment type="catalytic activity">
    <reaction evidence="1">
        <text>sulfate + ATP + H(+) = adenosine 5'-phosphosulfate + diphosphate</text>
        <dbReference type="Rhea" id="RHEA:18133"/>
        <dbReference type="ChEBI" id="CHEBI:15378"/>
        <dbReference type="ChEBI" id="CHEBI:16189"/>
        <dbReference type="ChEBI" id="CHEBI:30616"/>
        <dbReference type="ChEBI" id="CHEBI:33019"/>
        <dbReference type="ChEBI" id="CHEBI:58243"/>
        <dbReference type="EC" id="2.7.7.4"/>
    </reaction>
</comment>
<comment type="pathway">
    <text evidence="1">Sulfur metabolism; hydrogen sulfide biosynthesis; sulfite from sulfate: step 1/3.</text>
</comment>
<comment type="subunit">
    <text evidence="1">Heterodimer composed of CysD, the smaller subunit, and CysN.</text>
</comment>
<comment type="similarity">
    <text evidence="1">Belongs to the PAPS reductase family. CysD subfamily.</text>
</comment>